<feature type="chain" id="PRO_1000185700" description="Protein Ves">
    <location>
        <begin position="1"/>
        <end position="191"/>
    </location>
</feature>
<comment type="similarity">
    <text evidence="1">Belongs to the Ves family.</text>
</comment>
<dbReference type="EMBL" id="CU928145">
    <property type="protein sequence ID" value="CAU97769.1"/>
    <property type="molecule type" value="Genomic_DNA"/>
</dbReference>
<dbReference type="RefSeq" id="WP_001351353.1">
    <property type="nucleotide sequence ID" value="NC_011748.1"/>
</dbReference>
<dbReference type="SMR" id="B7L6L6"/>
<dbReference type="KEGG" id="eck:EC55989_1910"/>
<dbReference type="HOGENOM" id="CLU_090931_5_0_6"/>
<dbReference type="Proteomes" id="UP000000746">
    <property type="component" value="Chromosome"/>
</dbReference>
<dbReference type="CDD" id="cd20293">
    <property type="entry name" value="cupin_HutD_N"/>
    <property type="match status" value="1"/>
</dbReference>
<dbReference type="Gene3D" id="2.60.120.10">
    <property type="entry name" value="Jelly Rolls"/>
    <property type="match status" value="1"/>
</dbReference>
<dbReference type="HAMAP" id="MF_01591">
    <property type="entry name" value="Ves"/>
    <property type="match status" value="1"/>
</dbReference>
<dbReference type="InterPro" id="IPR014710">
    <property type="entry name" value="RmlC-like_jellyroll"/>
</dbReference>
<dbReference type="InterPro" id="IPR011051">
    <property type="entry name" value="RmlC_Cupin_sf"/>
</dbReference>
<dbReference type="InterPro" id="IPR010282">
    <property type="entry name" value="Uncharacterised_HutD/Ves"/>
</dbReference>
<dbReference type="InterPro" id="IPR023482">
    <property type="entry name" value="Uncharacterised_Ves"/>
</dbReference>
<dbReference type="NCBIfam" id="NF008488">
    <property type="entry name" value="PRK11396.1"/>
    <property type="match status" value="1"/>
</dbReference>
<dbReference type="PANTHER" id="PTHR37943">
    <property type="entry name" value="PROTEIN VES"/>
    <property type="match status" value="1"/>
</dbReference>
<dbReference type="PANTHER" id="PTHR37943:SF1">
    <property type="entry name" value="PROTEIN VES"/>
    <property type="match status" value="1"/>
</dbReference>
<dbReference type="Pfam" id="PF05962">
    <property type="entry name" value="HutD"/>
    <property type="match status" value="1"/>
</dbReference>
<dbReference type="SUPFAM" id="SSF51182">
    <property type="entry name" value="RmlC-like cupins"/>
    <property type="match status" value="1"/>
</dbReference>
<protein>
    <recommendedName>
        <fullName evidence="1">Protein Ves</fullName>
    </recommendedName>
</protein>
<evidence type="ECO:0000255" key="1">
    <source>
        <dbReference type="HAMAP-Rule" id="MF_01591"/>
    </source>
</evidence>
<organism>
    <name type="scientific">Escherichia coli (strain 55989 / EAEC)</name>
    <dbReference type="NCBI Taxonomy" id="585055"/>
    <lineage>
        <taxon>Bacteria</taxon>
        <taxon>Pseudomonadati</taxon>
        <taxon>Pseudomonadota</taxon>
        <taxon>Gammaproteobacteria</taxon>
        <taxon>Enterobacterales</taxon>
        <taxon>Enterobacteriaceae</taxon>
        <taxon>Escherichia</taxon>
    </lineage>
</organism>
<name>VES_ECO55</name>
<sequence length="191" mass="21490">MEYFDMRKMSVNLWRNAAGETREICTFPPAKRDFYWRASIASIAANGEFSLFPGMERIVTLLEGGEMLLESADRFNHTLKPLQPFAFAADQVVKAKLTAGQMSMDFNIMTRLDVCKAKVRIAERTFTTFGSCGGVVFVINGAWQLGDKLLTTDQGACWFDGRHTLRLLQPQGKLLFSEINWLAGHSPDQVQ</sequence>
<gene>
    <name evidence="1" type="primary">ves</name>
    <name type="ordered locus">EC55989_1910</name>
</gene>
<accession>B7L6L6</accession>
<reference key="1">
    <citation type="journal article" date="2009" name="PLoS Genet.">
        <title>Organised genome dynamics in the Escherichia coli species results in highly diverse adaptive paths.</title>
        <authorList>
            <person name="Touchon M."/>
            <person name="Hoede C."/>
            <person name="Tenaillon O."/>
            <person name="Barbe V."/>
            <person name="Baeriswyl S."/>
            <person name="Bidet P."/>
            <person name="Bingen E."/>
            <person name="Bonacorsi S."/>
            <person name="Bouchier C."/>
            <person name="Bouvet O."/>
            <person name="Calteau A."/>
            <person name="Chiapello H."/>
            <person name="Clermont O."/>
            <person name="Cruveiller S."/>
            <person name="Danchin A."/>
            <person name="Diard M."/>
            <person name="Dossat C."/>
            <person name="Karoui M.E."/>
            <person name="Frapy E."/>
            <person name="Garry L."/>
            <person name="Ghigo J.M."/>
            <person name="Gilles A.M."/>
            <person name="Johnson J."/>
            <person name="Le Bouguenec C."/>
            <person name="Lescat M."/>
            <person name="Mangenot S."/>
            <person name="Martinez-Jehanne V."/>
            <person name="Matic I."/>
            <person name="Nassif X."/>
            <person name="Oztas S."/>
            <person name="Petit M.A."/>
            <person name="Pichon C."/>
            <person name="Rouy Z."/>
            <person name="Ruf C.S."/>
            <person name="Schneider D."/>
            <person name="Tourret J."/>
            <person name="Vacherie B."/>
            <person name="Vallenet D."/>
            <person name="Medigue C."/>
            <person name="Rocha E.P.C."/>
            <person name="Denamur E."/>
        </authorList>
    </citation>
    <scope>NUCLEOTIDE SEQUENCE [LARGE SCALE GENOMIC DNA]</scope>
    <source>
        <strain>55989 / EAEC</strain>
    </source>
</reference>
<proteinExistence type="inferred from homology"/>
<keyword id="KW-1185">Reference proteome</keyword>